<name>IF3_SHEB2</name>
<accession>B8EES7</accession>
<feature type="chain" id="PRO_1000190841" description="Translation initiation factor IF-3">
    <location>
        <begin position="1"/>
        <end position="180"/>
    </location>
</feature>
<organism>
    <name type="scientific">Shewanella baltica (strain OS223)</name>
    <dbReference type="NCBI Taxonomy" id="407976"/>
    <lineage>
        <taxon>Bacteria</taxon>
        <taxon>Pseudomonadati</taxon>
        <taxon>Pseudomonadota</taxon>
        <taxon>Gammaproteobacteria</taxon>
        <taxon>Alteromonadales</taxon>
        <taxon>Shewanellaceae</taxon>
        <taxon>Shewanella</taxon>
    </lineage>
</organism>
<dbReference type="EMBL" id="CP001252">
    <property type="protein sequence ID" value="ACK46685.1"/>
    <property type="molecule type" value="Genomic_DNA"/>
</dbReference>
<dbReference type="RefSeq" id="WP_012089240.1">
    <property type="nucleotide sequence ID" value="NC_011663.1"/>
</dbReference>
<dbReference type="SMR" id="B8EES7"/>
<dbReference type="GeneID" id="11772456"/>
<dbReference type="KEGG" id="sbp:Sbal223_2185"/>
<dbReference type="HOGENOM" id="CLU_054919_3_2_6"/>
<dbReference type="Proteomes" id="UP000002507">
    <property type="component" value="Chromosome"/>
</dbReference>
<dbReference type="GO" id="GO:0005829">
    <property type="term" value="C:cytosol"/>
    <property type="evidence" value="ECO:0007669"/>
    <property type="project" value="TreeGrafter"/>
</dbReference>
<dbReference type="GO" id="GO:0016020">
    <property type="term" value="C:membrane"/>
    <property type="evidence" value="ECO:0007669"/>
    <property type="project" value="TreeGrafter"/>
</dbReference>
<dbReference type="GO" id="GO:0043022">
    <property type="term" value="F:ribosome binding"/>
    <property type="evidence" value="ECO:0007669"/>
    <property type="project" value="TreeGrafter"/>
</dbReference>
<dbReference type="GO" id="GO:0003743">
    <property type="term" value="F:translation initiation factor activity"/>
    <property type="evidence" value="ECO:0007669"/>
    <property type="project" value="UniProtKB-UniRule"/>
</dbReference>
<dbReference type="GO" id="GO:0032790">
    <property type="term" value="P:ribosome disassembly"/>
    <property type="evidence" value="ECO:0007669"/>
    <property type="project" value="TreeGrafter"/>
</dbReference>
<dbReference type="FunFam" id="3.10.20.80:FF:000001">
    <property type="entry name" value="Translation initiation factor IF-3"/>
    <property type="match status" value="1"/>
</dbReference>
<dbReference type="FunFam" id="3.30.110.10:FF:000001">
    <property type="entry name" value="Translation initiation factor IF-3"/>
    <property type="match status" value="1"/>
</dbReference>
<dbReference type="Gene3D" id="3.30.110.10">
    <property type="entry name" value="Translation initiation factor 3 (IF-3), C-terminal domain"/>
    <property type="match status" value="1"/>
</dbReference>
<dbReference type="Gene3D" id="3.10.20.80">
    <property type="entry name" value="Translation initiation factor 3 (IF-3), N-terminal domain"/>
    <property type="match status" value="1"/>
</dbReference>
<dbReference type="HAMAP" id="MF_00080">
    <property type="entry name" value="IF_3"/>
    <property type="match status" value="1"/>
</dbReference>
<dbReference type="InterPro" id="IPR036788">
    <property type="entry name" value="T_IF-3_C_sf"/>
</dbReference>
<dbReference type="InterPro" id="IPR036787">
    <property type="entry name" value="T_IF-3_N_sf"/>
</dbReference>
<dbReference type="InterPro" id="IPR019813">
    <property type="entry name" value="Translation_initiation_fac3_CS"/>
</dbReference>
<dbReference type="InterPro" id="IPR001288">
    <property type="entry name" value="Translation_initiation_fac_3"/>
</dbReference>
<dbReference type="InterPro" id="IPR019815">
    <property type="entry name" value="Translation_initiation_fac_3_C"/>
</dbReference>
<dbReference type="InterPro" id="IPR019814">
    <property type="entry name" value="Translation_initiation_fac_3_N"/>
</dbReference>
<dbReference type="NCBIfam" id="TIGR00168">
    <property type="entry name" value="infC"/>
    <property type="match status" value="1"/>
</dbReference>
<dbReference type="PANTHER" id="PTHR10938">
    <property type="entry name" value="TRANSLATION INITIATION FACTOR IF-3"/>
    <property type="match status" value="1"/>
</dbReference>
<dbReference type="PANTHER" id="PTHR10938:SF0">
    <property type="entry name" value="TRANSLATION INITIATION FACTOR IF-3, MITOCHONDRIAL"/>
    <property type="match status" value="1"/>
</dbReference>
<dbReference type="Pfam" id="PF00707">
    <property type="entry name" value="IF3_C"/>
    <property type="match status" value="1"/>
</dbReference>
<dbReference type="Pfam" id="PF05198">
    <property type="entry name" value="IF3_N"/>
    <property type="match status" value="1"/>
</dbReference>
<dbReference type="SUPFAM" id="SSF55200">
    <property type="entry name" value="Translation initiation factor IF3, C-terminal domain"/>
    <property type="match status" value="1"/>
</dbReference>
<dbReference type="SUPFAM" id="SSF54364">
    <property type="entry name" value="Translation initiation factor IF3, N-terminal domain"/>
    <property type="match status" value="1"/>
</dbReference>
<dbReference type="PROSITE" id="PS00938">
    <property type="entry name" value="IF3"/>
    <property type="match status" value="1"/>
</dbReference>
<keyword id="KW-0963">Cytoplasm</keyword>
<keyword id="KW-0396">Initiation factor</keyword>
<keyword id="KW-0648">Protein biosynthesis</keyword>
<gene>
    <name evidence="1" type="primary">infC</name>
    <name type="ordered locus">Sbal223_2185</name>
</gene>
<reference key="1">
    <citation type="submission" date="2008-12" db="EMBL/GenBank/DDBJ databases">
        <title>Complete sequence of chromosome of Shewanella baltica OS223.</title>
        <authorList>
            <consortium name="US DOE Joint Genome Institute"/>
            <person name="Lucas S."/>
            <person name="Copeland A."/>
            <person name="Lapidus A."/>
            <person name="Glavina del Rio T."/>
            <person name="Dalin E."/>
            <person name="Tice H."/>
            <person name="Bruce D."/>
            <person name="Goodwin L."/>
            <person name="Pitluck S."/>
            <person name="Chertkov O."/>
            <person name="Meincke L."/>
            <person name="Brettin T."/>
            <person name="Detter J.C."/>
            <person name="Han C."/>
            <person name="Kuske C.R."/>
            <person name="Larimer F."/>
            <person name="Land M."/>
            <person name="Hauser L."/>
            <person name="Kyrpides N."/>
            <person name="Ovchinnikova G."/>
            <person name="Brettar I."/>
            <person name="Rodrigues J."/>
            <person name="Konstantinidis K."/>
            <person name="Tiedje J."/>
        </authorList>
    </citation>
    <scope>NUCLEOTIDE SEQUENCE [LARGE SCALE GENOMIC DNA]</scope>
    <source>
        <strain>OS223</strain>
    </source>
</reference>
<sequence>MKIKKTAGRQPAPNRINEEITGVPEVRLTGIDGEAIGVVSIRDAQNLADEAGVDLVEISPNAEPPVCRIMDYGKFLFDKAKSAKEQKKKQKQVQVKEIKFRPGTDENDYQVKLRNLIRFLEDGDKAKITLRFRGREMAHQNLGMDLLNRIKADLDEYAVVESFPKMEGRQAIMVLAPKKK</sequence>
<protein>
    <recommendedName>
        <fullName evidence="1">Translation initiation factor IF-3</fullName>
    </recommendedName>
</protein>
<proteinExistence type="inferred from homology"/>
<evidence type="ECO:0000255" key="1">
    <source>
        <dbReference type="HAMAP-Rule" id="MF_00080"/>
    </source>
</evidence>
<comment type="function">
    <text evidence="1">IF-3 binds to the 30S ribosomal subunit and shifts the equilibrium between 70S ribosomes and their 50S and 30S subunits in favor of the free subunits, thus enhancing the availability of 30S subunits on which protein synthesis initiation begins.</text>
</comment>
<comment type="subunit">
    <text evidence="1">Monomer.</text>
</comment>
<comment type="subcellular location">
    <subcellularLocation>
        <location evidence="1">Cytoplasm</location>
    </subcellularLocation>
</comment>
<comment type="similarity">
    <text evidence="1">Belongs to the IF-3 family.</text>
</comment>